<keyword id="KW-0175">Coiled coil</keyword>
<keyword id="KW-0472">Membrane</keyword>
<keyword id="KW-0496">Mitochondrion</keyword>
<keyword id="KW-1000">Mitochondrion outer membrane</keyword>
<keyword id="KW-0597">Phosphoprotein</keyword>
<keyword id="KW-0677">Repeat</keyword>
<keyword id="KW-0853">WD repeat</keyword>
<accession>A6ZQL5</accession>
<name>MDV1_YEAS7</name>
<feature type="chain" id="PRO_0000330115" description="Mitochondrial division protein 1">
    <location>
        <begin position="1"/>
        <end position="714"/>
    </location>
</feature>
<feature type="repeat" description="WD 1">
    <location>
        <begin position="396"/>
        <end position="436"/>
    </location>
</feature>
<feature type="repeat" description="WD 2">
    <location>
        <begin position="439"/>
        <end position="478"/>
    </location>
</feature>
<feature type="repeat" description="WD 3">
    <location>
        <begin position="500"/>
        <end position="539"/>
    </location>
</feature>
<feature type="repeat" description="WD 4">
    <location>
        <begin position="561"/>
        <end position="603"/>
    </location>
</feature>
<feature type="repeat" description="WD 5">
    <location>
        <begin position="604"/>
        <end position="642"/>
    </location>
</feature>
<feature type="repeat" description="WD 6">
    <location>
        <begin position="644"/>
        <end position="681"/>
    </location>
</feature>
<feature type="repeat" description="WD 7">
    <location>
        <begin position="685"/>
        <end position="714"/>
    </location>
</feature>
<feature type="region of interest" description="Disordered" evidence="4">
    <location>
        <begin position="323"/>
        <end position="354"/>
    </location>
</feature>
<feature type="coiled-coil region" evidence="3">
    <location>
        <begin position="240"/>
        <end position="298"/>
    </location>
</feature>
<feature type="compositionally biased region" description="Polar residues" evidence="4">
    <location>
        <begin position="332"/>
        <end position="343"/>
    </location>
</feature>
<feature type="modified residue" description="Phosphoserine" evidence="2">
    <location>
        <position position="376"/>
    </location>
</feature>
<comment type="function">
    <text evidence="1">Involved in mitochondrial fission. Has a partially redundant function to CAF4 in acting as an adapter protein, binding to FIS1 on the mitochondrial outer membrane and recruiting the dynamin-like GTPase DNM1 to form mitochondrial fission complexes. Formation of these complexes is required to promote constriction and fission of the mitochondrial compartment at a late step in mitochondrial division (By similarity).</text>
</comment>
<comment type="subunit">
    <text evidence="1">Interacts with CAF4, DNM1 and FIS1, components of the mitochondrial fission machinery. Interacts via its N-terminal, coiled-coil extension (NTE) with FIS1, and via its WD repeats with DNM1 (By similarity).</text>
</comment>
<comment type="subcellular location">
    <subcellularLocation>
        <location evidence="1">Mitochondrion outer membrane</location>
        <topology evidence="1">Peripheral membrane protein</topology>
        <orientation evidence="1">Cytoplasmic side</orientation>
    </subcellularLocation>
    <text evidence="1">Uniformly distributed on the cytoplasmic face of the mitochondrial outer membrane. This localization is dependent on FIS1. Reorganizes to punctate structures on mitochondria, corresponding to mitochondrial constriction sites, at a late step in mitochondrial division. This relocalization is dependent on DNM1 (By similarity).</text>
</comment>
<comment type="similarity">
    <text evidence="5">Belongs to the WD repeat MDV1/CAF4 family.</text>
</comment>
<reference key="1">
    <citation type="journal article" date="2007" name="Proc. Natl. Acad. Sci. U.S.A.">
        <title>Genome sequencing and comparative analysis of Saccharomyces cerevisiae strain YJM789.</title>
        <authorList>
            <person name="Wei W."/>
            <person name="McCusker J.H."/>
            <person name="Hyman R.W."/>
            <person name="Jones T."/>
            <person name="Ning Y."/>
            <person name="Cao Z."/>
            <person name="Gu Z."/>
            <person name="Bruno D."/>
            <person name="Miranda M."/>
            <person name="Nguyen M."/>
            <person name="Wilhelmy J."/>
            <person name="Komp C."/>
            <person name="Tamse R."/>
            <person name="Wang X."/>
            <person name="Jia P."/>
            <person name="Luedi P."/>
            <person name="Oefner P.J."/>
            <person name="David L."/>
            <person name="Dietrich F.S."/>
            <person name="Li Y."/>
            <person name="Davis R.W."/>
            <person name="Steinmetz L.M."/>
        </authorList>
    </citation>
    <scope>NUCLEOTIDE SEQUENCE [LARGE SCALE GENOMIC DNA]</scope>
    <source>
        <strain>YJM789</strain>
    </source>
</reference>
<evidence type="ECO:0000250" key="1"/>
<evidence type="ECO:0000250" key="2">
    <source>
        <dbReference type="UniProtKB" id="P47025"/>
    </source>
</evidence>
<evidence type="ECO:0000255" key="3"/>
<evidence type="ECO:0000256" key="4">
    <source>
        <dbReference type="SAM" id="MobiDB-lite"/>
    </source>
</evidence>
<evidence type="ECO:0000305" key="5"/>
<gene>
    <name type="primary">MDV1</name>
    <name type="synonym">FIS2</name>
    <name type="synonym">GAG3</name>
    <name type="synonym">NET2</name>
    <name type="ORF">SCY_3176</name>
</gene>
<organism>
    <name type="scientific">Saccharomyces cerevisiae (strain YJM789)</name>
    <name type="common">Baker's yeast</name>
    <dbReference type="NCBI Taxonomy" id="307796"/>
    <lineage>
        <taxon>Eukaryota</taxon>
        <taxon>Fungi</taxon>
        <taxon>Dikarya</taxon>
        <taxon>Ascomycota</taxon>
        <taxon>Saccharomycotina</taxon>
        <taxon>Saccharomycetes</taxon>
        <taxon>Saccharomycetales</taxon>
        <taxon>Saccharomycetaceae</taxon>
        <taxon>Saccharomyces</taxon>
    </lineage>
</organism>
<dbReference type="EMBL" id="AAFW02000044">
    <property type="protein sequence ID" value="EDN63267.1"/>
    <property type="molecule type" value="Genomic_DNA"/>
</dbReference>
<dbReference type="SMR" id="A6ZQL5"/>
<dbReference type="HOGENOM" id="CLU_012350_1_0_1"/>
<dbReference type="Proteomes" id="UP000007060">
    <property type="component" value="Unassembled WGS sequence"/>
</dbReference>
<dbReference type="GO" id="GO:0005741">
    <property type="term" value="C:mitochondrial outer membrane"/>
    <property type="evidence" value="ECO:0007669"/>
    <property type="project" value="UniProtKB-SubCell"/>
</dbReference>
<dbReference type="CDD" id="cd22881">
    <property type="entry name" value="Mdv1_N"/>
    <property type="match status" value="1"/>
</dbReference>
<dbReference type="CDD" id="cd00200">
    <property type="entry name" value="WD40"/>
    <property type="match status" value="1"/>
</dbReference>
<dbReference type="FunFam" id="2.130.10.10:FF:001052">
    <property type="entry name" value="Mitochondrial division protein 1"/>
    <property type="match status" value="1"/>
</dbReference>
<dbReference type="FunFam" id="2.130.10.10:FF:001053">
    <property type="entry name" value="Mitochondrial division protein 1"/>
    <property type="match status" value="1"/>
</dbReference>
<dbReference type="Gene3D" id="6.10.280.220">
    <property type="match status" value="1"/>
</dbReference>
<dbReference type="Gene3D" id="2.130.10.10">
    <property type="entry name" value="YVTN repeat-like/Quinoprotein amine dehydrogenase"/>
    <property type="match status" value="2"/>
</dbReference>
<dbReference type="InterPro" id="IPR020472">
    <property type="entry name" value="G-protein_beta_WD-40_rep"/>
</dbReference>
<dbReference type="InterPro" id="IPR021061">
    <property type="entry name" value="Mt_division_protein_1"/>
</dbReference>
<dbReference type="InterPro" id="IPR015943">
    <property type="entry name" value="WD40/YVTN_repeat-like_dom_sf"/>
</dbReference>
<dbReference type="InterPro" id="IPR019775">
    <property type="entry name" value="WD40_repeat_CS"/>
</dbReference>
<dbReference type="InterPro" id="IPR036322">
    <property type="entry name" value="WD40_repeat_dom_sf"/>
</dbReference>
<dbReference type="InterPro" id="IPR001680">
    <property type="entry name" value="WD40_rpt"/>
</dbReference>
<dbReference type="InterPro" id="IPR051179">
    <property type="entry name" value="WD_repeat_multifunction"/>
</dbReference>
<dbReference type="PANTHER" id="PTHR19857:SF8">
    <property type="entry name" value="ANGIO-ASSOCIATED MIGRATORY CELL PROTEIN"/>
    <property type="match status" value="1"/>
</dbReference>
<dbReference type="PANTHER" id="PTHR19857">
    <property type="entry name" value="MITOCHONDRIAL DIVISION PROTEIN 1-RELATED"/>
    <property type="match status" value="1"/>
</dbReference>
<dbReference type="Pfam" id="PF11542">
    <property type="entry name" value="Mdv1"/>
    <property type="match status" value="1"/>
</dbReference>
<dbReference type="Pfam" id="PF00400">
    <property type="entry name" value="WD40"/>
    <property type="match status" value="4"/>
</dbReference>
<dbReference type="PRINTS" id="PR00320">
    <property type="entry name" value="GPROTEINBRPT"/>
</dbReference>
<dbReference type="SMART" id="SM00320">
    <property type="entry name" value="WD40"/>
    <property type="match status" value="6"/>
</dbReference>
<dbReference type="SUPFAM" id="SSF50978">
    <property type="entry name" value="WD40 repeat-like"/>
    <property type="match status" value="1"/>
</dbReference>
<dbReference type="PROSITE" id="PS00678">
    <property type="entry name" value="WD_REPEATS_1"/>
    <property type="match status" value="4"/>
</dbReference>
<dbReference type="PROSITE" id="PS50082">
    <property type="entry name" value="WD_REPEATS_2"/>
    <property type="match status" value="6"/>
</dbReference>
<dbReference type="PROSITE" id="PS50294">
    <property type="entry name" value="WD_REPEATS_REGION"/>
    <property type="match status" value="1"/>
</dbReference>
<protein>
    <recommendedName>
        <fullName>Mitochondrial division protein 1</fullName>
    </recommendedName>
    <alternativeName>
        <fullName>Mitochondria fission 2 protein</fullName>
    </alternativeName>
</protein>
<proteinExistence type="inferred from homology"/>
<sequence length="714" mass="80058">MSVNDQITHIGKTLSTTASAFLNYQKSNSNTQDVLTNNGPYKNLLSNTVNNASSTSYFYKRTEHGRFVKNASNTFEDIYSKTRRGDVFRNKFTDNKTCFRMLTYISDDLLNEIPTKEGLKSDADGKLLTEGGENENLRKNASKKETSLFQGFKSYLPIAELAIENTERLNYDTNGTSGTVGAKDVMSKTNERDEIHTELPNFQDSFLIPPGVETKKISSSYSPSALKSFSQTLVNSLEFLNIQKNSTLSEIRDIEVEVENLRQKKEKLLGKIANIEQNQLLLEDNLKQIDDRLDFLEEYGLEVIEANSDENAEDDGMSERKALKNDAIRNEGVTTESISSEASNLPPRRRQQLRDDNSLNRLGAFYSKSKKRHRKSFPTFQQLYEPGTKIGSIMSTHDDFLTCLDFDAPFGTLCTAGYLDHTVKIWDLSKQNKIGELAGHLATINCMQINRDYGTLVTGGRDAALKLWNLNLAQQLYQETQNLTSPTNHIDSPCVYTFEAHTDEVTALSLDPSFLVSGSQDRTIRQWDLRSGKCLQTIDLSFANVLTTSTNVDLSKSTLLTQRNERPSIGALQSFDAALATGTKDGVVRLWDLRSGKVIRTLKGHTDAITSLKFDSACLVTGSYDRTVRIWDLRTGLLNKFHAYSAPVLSLDLFQENAAVVVADEPSVQIYDSEKDESWSCVEQGNETSVSTVKYKENYMVEGRENGDVNIWAV</sequence>